<protein>
    <recommendedName>
        <fullName evidence="1">Pyridoxine/pyridoxamine 5'-phosphate oxidase</fullName>
        <ecNumber evidence="1">1.4.3.5</ecNumber>
    </recommendedName>
    <alternativeName>
        <fullName evidence="1">PNP/PMP oxidase</fullName>
        <shortName evidence="1">PNPOx</shortName>
    </alternativeName>
    <alternativeName>
        <fullName evidence="1">Pyridoxal 5'-phosphate synthase</fullName>
    </alternativeName>
</protein>
<accession>Q92RH8</accession>
<feature type="chain" id="PRO_0000167747" description="Pyridoxine/pyridoxamine 5'-phosphate oxidase">
    <location>
        <begin position="1"/>
        <end position="206"/>
    </location>
</feature>
<feature type="binding site" evidence="1">
    <location>
        <begin position="53"/>
        <end position="58"/>
    </location>
    <ligand>
        <name>FMN</name>
        <dbReference type="ChEBI" id="CHEBI:58210"/>
    </ligand>
</feature>
<feature type="binding site" evidence="1">
    <location>
        <position position="58"/>
    </location>
    <ligand>
        <name>substrate</name>
    </ligand>
</feature>
<feature type="binding site" evidence="1">
    <location>
        <begin position="68"/>
        <end position="69"/>
    </location>
    <ligand>
        <name>FMN</name>
        <dbReference type="ChEBI" id="CHEBI:58210"/>
    </ligand>
</feature>
<feature type="binding site" evidence="1">
    <location>
        <position position="75"/>
    </location>
    <ligand>
        <name>FMN</name>
        <dbReference type="ChEBI" id="CHEBI:58210"/>
    </ligand>
</feature>
<feature type="binding site" evidence="1">
    <location>
        <position position="97"/>
    </location>
    <ligand>
        <name>FMN</name>
        <dbReference type="ChEBI" id="CHEBI:58210"/>
    </ligand>
</feature>
<feature type="binding site" evidence="1">
    <location>
        <position position="115"/>
    </location>
    <ligand>
        <name>substrate</name>
    </ligand>
</feature>
<feature type="binding site" evidence="1">
    <location>
        <position position="119"/>
    </location>
    <ligand>
        <name>substrate</name>
    </ligand>
</feature>
<feature type="binding site" evidence="1">
    <location>
        <position position="123"/>
    </location>
    <ligand>
        <name>substrate</name>
    </ligand>
</feature>
<feature type="binding site" evidence="1">
    <location>
        <begin position="132"/>
        <end position="133"/>
    </location>
    <ligand>
        <name>FMN</name>
        <dbReference type="ChEBI" id="CHEBI:58210"/>
    </ligand>
</feature>
<feature type="binding site" evidence="1">
    <location>
        <position position="177"/>
    </location>
    <ligand>
        <name>FMN</name>
        <dbReference type="ChEBI" id="CHEBI:58210"/>
    </ligand>
</feature>
<feature type="binding site" evidence="1">
    <location>
        <begin position="183"/>
        <end position="185"/>
    </location>
    <ligand>
        <name>substrate</name>
    </ligand>
</feature>
<feature type="binding site" evidence="1">
    <location>
        <position position="187"/>
    </location>
    <ligand>
        <name>FMN</name>
        <dbReference type="ChEBI" id="CHEBI:58210"/>
    </ligand>
</feature>
<name>PDXH_RHIME</name>
<organism>
    <name type="scientific">Rhizobium meliloti (strain 1021)</name>
    <name type="common">Ensifer meliloti</name>
    <name type="synonym">Sinorhizobium meliloti</name>
    <dbReference type="NCBI Taxonomy" id="266834"/>
    <lineage>
        <taxon>Bacteria</taxon>
        <taxon>Pseudomonadati</taxon>
        <taxon>Pseudomonadota</taxon>
        <taxon>Alphaproteobacteria</taxon>
        <taxon>Hyphomicrobiales</taxon>
        <taxon>Rhizobiaceae</taxon>
        <taxon>Sinorhizobium/Ensifer group</taxon>
        <taxon>Sinorhizobium</taxon>
    </lineage>
</organism>
<evidence type="ECO:0000255" key="1">
    <source>
        <dbReference type="HAMAP-Rule" id="MF_01629"/>
    </source>
</evidence>
<gene>
    <name evidence="1" type="primary">pdxH</name>
    <name type="ordered locus">R00895</name>
    <name type="ORF">SMc00069</name>
</gene>
<comment type="function">
    <text evidence="1">Catalyzes the oxidation of either pyridoxine 5'-phosphate (PNP) or pyridoxamine 5'-phosphate (PMP) into pyridoxal 5'-phosphate (PLP).</text>
</comment>
<comment type="catalytic activity">
    <reaction evidence="1">
        <text>pyridoxamine 5'-phosphate + O2 + H2O = pyridoxal 5'-phosphate + H2O2 + NH4(+)</text>
        <dbReference type="Rhea" id="RHEA:15817"/>
        <dbReference type="ChEBI" id="CHEBI:15377"/>
        <dbReference type="ChEBI" id="CHEBI:15379"/>
        <dbReference type="ChEBI" id="CHEBI:16240"/>
        <dbReference type="ChEBI" id="CHEBI:28938"/>
        <dbReference type="ChEBI" id="CHEBI:58451"/>
        <dbReference type="ChEBI" id="CHEBI:597326"/>
        <dbReference type="EC" id="1.4.3.5"/>
    </reaction>
</comment>
<comment type="catalytic activity">
    <reaction evidence="1">
        <text>pyridoxine 5'-phosphate + O2 = pyridoxal 5'-phosphate + H2O2</text>
        <dbReference type="Rhea" id="RHEA:15149"/>
        <dbReference type="ChEBI" id="CHEBI:15379"/>
        <dbReference type="ChEBI" id="CHEBI:16240"/>
        <dbReference type="ChEBI" id="CHEBI:58589"/>
        <dbReference type="ChEBI" id="CHEBI:597326"/>
        <dbReference type="EC" id="1.4.3.5"/>
    </reaction>
</comment>
<comment type="cofactor">
    <cofactor evidence="1">
        <name>FMN</name>
        <dbReference type="ChEBI" id="CHEBI:58210"/>
    </cofactor>
    <text evidence="1">Binds 1 FMN per subunit.</text>
</comment>
<comment type="pathway">
    <text evidence="1">Cofactor metabolism; pyridoxal 5'-phosphate salvage; pyridoxal 5'-phosphate from pyridoxamine 5'-phosphate: step 1/1.</text>
</comment>
<comment type="pathway">
    <text evidence="1">Cofactor metabolism; pyridoxal 5'-phosphate salvage; pyridoxal 5'-phosphate from pyridoxine 5'-phosphate: step 1/1.</text>
</comment>
<comment type="subunit">
    <text evidence="1">Homodimer.</text>
</comment>
<comment type="similarity">
    <text evidence="1">Belongs to the pyridoxamine 5'-phosphate oxidase family.</text>
</comment>
<keyword id="KW-0285">Flavoprotein</keyword>
<keyword id="KW-0288">FMN</keyword>
<keyword id="KW-0560">Oxidoreductase</keyword>
<keyword id="KW-0664">Pyridoxine biosynthesis</keyword>
<keyword id="KW-1185">Reference proteome</keyword>
<sequence>MTANELITGDFTDASEPFSLFGTWLKEAEKNEVNDPNAVALATVDPDGMPNVRMVLLKGFDERGFVLYTNFESQKGREMLATRKAALCFHWKSLRRQVRLRGPVEIVSDEEADEYFMSRPRGSRIGAWASKQSRPLESRFALEKAVAEYTARHAIGEIPRPDYWSGFRIRPLSIEFWHDRPFRLHDRVEFRRETPDGGWTKVRMYP</sequence>
<reference key="1">
    <citation type="journal article" date="2001" name="Proc. Natl. Acad. Sci. U.S.A.">
        <title>Analysis of the chromosome sequence of the legume symbiont Sinorhizobium meliloti strain 1021.</title>
        <authorList>
            <person name="Capela D."/>
            <person name="Barloy-Hubler F."/>
            <person name="Gouzy J."/>
            <person name="Bothe G."/>
            <person name="Ampe F."/>
            <person name="Batut J."/>
            <person name="Boistard P."/>
            <person name="Becker A."/>
            <person name="Boutry M."/>
            <person name="Cadieu E."/>
            <person name="Dreano S."/>
            <person name="Gloux S."/>
            <person name="Godrie T."/>
            <person name="Goffeau A."/>
            <person name="Kahn D."/>
            <person name="Kiss E."/>
            <person name="Lelaure V."/>
            <person name="Masuy D."/>
            <person name="Pohl T."/>
            <person name="Portetelle D."/>
            <person name="Puehler A."/>
            <person name="Purnelle B."/>
            <person name="Ramsperger U."/>
            <person name="Renard C."/>
            <person name="Thebault P."/>
            <person name="Vandenbol M."/>
            <person name="Weidner S."/>
            <person name="Galibert F."/>
        </authorList>
    </citation>
    <scope>NUCLEOTIDE SEQUENCE [LARGE SCALE GENOMIC DNA]</scope>
    <source>
        <strain>1021</strain>
    </source>
</reference>
<reference key="2">
    <citation type="journal article" date="2001" name="Science">
        <title>The composite genome of the legume symbiont Sinorhizobium meliloti.</title>
        <authorList>
            <person name="Galibert F."/>
            <person name="Finan T.M."/>
            <person name="Long S.R."/>
            <person name="Puehler A."/>
            <person name="Abola P."/>
            <person name="Ampe F."/>
            <person name="Barloy-Hubler F."/>
            <person name="Barnett M.J."/>
            <person name="Becker A."/>
            <person name="Boistard P."/>
            <person name="Bothe G."/>
            <person name="Boutry M."/>
            <person name="Bowser L."/>
            <person name="Buhrmester J."/>
            <person name="Cadieu E."/>
            <person name="Capela D."/>
            <person name="Chain P."/>
            <person name="Cowie A."/>
            <person name="Davis R.W."/>
            <person name="Dreano S."/>
            <person name="Federspiel N.A."/>
            <person name="Fisher R.F."/>
            <person name="Gloux S."/>
            <person name="Godrie T."/>
            <person name="Goffeau A."/>
            <person name="Golding B."/>
            <person name="Gouzy J."/>
            <person name="Gurjal M."/>
            <person name="Hernandez-Lucas I."/>
            <person name="Hong A."/>
            <person name="Huizar L."/>
            <person name="Hyman R.W."/>
            <person name="Jones T."/>
            <person name="Kahn D."/>
            <person name="Kahn M.L."/>
            <person name="Kalman S."/>
            <person name="Keating D.H."/>
            <person name="Kiss E."/>
            <person name="Komp C."/>
            <person name="Lelaure V."/>
            <person name="Masuy D."/>
            <person name="Palm C."/>
            <person name="Peck M.C."/>
            <person name="Pohl T.M."/>
            <person name="Portetelle D."/>
            <person name="Purnelle B."/>
            <person name="Ramsperger U."/>
            <person name="Surzycki R."/>
            <person name="Thebault P."/>
            <person name="Vandenbol M."/>
            <person name="Vorhoelter F.J."/>
            <person name="Weidner S."/>
            <person name="Wells D.H."/>
            <person name="Wong K."/>
            <person name="Yeh K.-C."/>
            <person name="Batut J."/>
        </authorList>
    </citation>
    <scope>NUCLEOTIDE SEQUENCE [LARGE SCALE GENOMIC DNA]</scope>
    <source>
        <strain>1021</strain>
    </source>
</reference>
<proteinExistence type="inferred from homology"/>
<dbReference type="EC" id="1.4.3.5" evidence="1"/>
<dbReference type="EMBL" id="AL591688">
    <property type="protein sequence ID" value="CAC45467.1"/>
    <property type="molecule type" value="Genomic_DNA"/>
</dbReference>
<dbReference type="RefSeq" id="NP_385001.1">
    <property type="nucleotide sequence ID" value="NC_003047.1"/>
</dbReference>
<dbReference type="RefSeq" id="WP_010968902.1">
    <property type="nucleotide sequence ID" value="NC_003047.1"/>
</dbReference>
<dbReference type="SMR" id="Q92RH8"/>
<dbReference type="EnsemblBacteria" id="CAC45467">
    <property type="protein sequence ID" value="CAC45467"/>
    <property type="gene ID" value="SMc00069"/>
</dbReference>
<dbReference type="KEGG" id="sme:SMc00069"/>
<dbReference type="PATRIC" id="fig|266834.11.peg.2290"/>
<dbReference type="eggNOG" id="COG0259">
    <property type="taxonomic scope" value="Bacteria"/>
</dbReference>
<dbReference type="HOGENOM" id="CLU_032263_2_3_5"/>
<dbReference type="OrthoDB" id="9780392at2"/>
<dbReference type="UniPathway" id="UPA01068">
    <property type="reaction ID" value="UER00304"/>
</dbReference>
<dbReference type="UniPathway" id="UPA01068">
    <property type="reaction ID" value="UER00305"/>
</dbReference>
<dbReference type="Proteomes" id="UP000001976">
    <property type="component" value="Chromosome"/>
</dbReference>
<dbReference type="GO" id="GO:0010181">
    <property type="term" value="F:FMN binding"/>
    <property type="evidence" value="ECO:0007669"/>
    <property type="project" value="UniProtKB-UniRule"/>
</dbReference>
<dbReference type="GO" id="GO:0004733">
    <property type="term" value="F:pyridoxamine phosphate oxidase activity"/>
    <property type="evidence" value="ECO:0007669"/>
    <property type="project" value="UniProtKB-UniRule"/>
</dbReference>
<dbReference type="GO" id="GO:0008615">
    <property type="term" value="P:pyridoxine biosynthetic process"/>
    <property type="evidence" value="ECO:0007669"/>
    <property type="project" value="UniProtKB-KW"/>
</dbReference>
<dbReference type="Gene3D" id="2.30.110.10">
    <property type="entry name" value="Electron Transport, Fmn-binding Protein, Chain A"/>
    <property type="match status" value="1"/>
</dbReference>
<dbReference type="HAMAP" id="MF_01629">
    <property type="entry name" value="PdxH"/>
    <property type="match status" value="1"/>
</dbReference>
<dbReference type="InterPro" id="IPR000659">
    <property type="entry name" value="Pyridox_Oxase"/>
</dbReference>
<dbReference type="InterPro" id="IPR019740">
    <property type="entry name" value="Pyridox_Oxase_CS"/>
</dbReference>
<dbReference type="InterPro" id="IPR011576">
    <property type="entry name" value="Pyridox_Oxase_N"/>
</dbReference>
<dbReference type="InterPro" id="IPR019576">
    <property type="entry name" value="Pyridoxamine_oxidase_dimer_C"/>
</dbReference>
<dbReference type="InterPro" id="IPR012349">
    <property type="entry name" value="Split_barrel_FMN-bd"/>
</dbReference>
<dbReference type="NCBIfam" id="TIGR00558">
    <property type="entry name" value="pdxH"/>
    <property type="match status" value="1"/>
</dbReference>
<dbReference type="NCBIfam" id="NF004231">
    <property type="entry name" value="PRK05679.1"/>
    <property type="match status" value="1"/>
</dbReference>
<dbReference type="PANTHER" id="PTHR10851:SF0">
    <property type="entry name" value="PYRIDOXINE-5'-PHOSPHATE OXIDASE"/>
    <property type="match status" value="1"/>
</dbReference>
<dbReference type="PANTHER" id="PTHR10851">
    <property type="entry name" value="PYRIDOXINE-5-PHOSPHATE OXIDASE"/>
    <property type="match status" value="1"/>
</dbReference>
<dbReference type="Pfam" id="PF10590">
    <property type="entry name" value="PNP_phzG_C"/>
    <property type="match status" value="1"/>
</dbReference>
<dbReference type="Pfam" id="PF01243">
    <property type="entry name" value="PNPOx_N"/>
    <property type="match status" value="1"/>
</dbReference>
<dbReference type="PIRSF" id="PIRSF000190">
    <property type="entry name" value="Pyd_amn-ph_oxd"/>
    <property type="match status" value="1"/>
</dbReference>
<dbReference type="SUPFAM" id="SSF50475">
    <property type="entry name" value="FMN-binding split barrel"/>
    <property type="match status" value="1"/>
</dbReference>
<dbReference type="PROSITE" id="PS01064">
    <property type="entry name" value="PYRIDOX_OXIDASE"/>
    <property type="match status" value="1"/>
</dbReference>